<comment type="function">
    <text evidence="1">Together with the chaperonin GroEL, plays an essential role in assisting protein folding. The GroEL-GroES system forms a nano-cage that allows encapsulation of the non-native substrate proteins and provides a physical environment optimized to promote and accelerate protein folding. GroES binds to the apical surface of the GroEL ring, thereby capping the opening of the GroEL channel.</text>
</comment>
<comment type="subunit">
    <text evidence="1">Heptamer of 7 subunits arranged in a ring. Interacts with the chaperonin GroEL.</text>
</comment>
<comment type="subcellular location">
    <subcellularLocation>
        <location evidence="1">Cytoplasm</location>
    </subcellularLocation>
</comment>
<comment type="similarity">
    <text evidence="1">Belongs to the GroES chaperonin family.</text>
</comment>
<gene>
    <name evidence="1" type="primary">groES</name>
    <name evidence="1" type="synonym">groS</name>
    <name type="ordered locus">HSM_0766</name>
</gene>
<organism>
    <name type="scientific">Histophilus somni (strain 2336)</name>
    <name type="common">Haemophilus somnus</name>
    <dbReference type="NCBI Taxonomy" id="228400"/>
    <lineage>
        <taxon>Bacteria</taxon>
        <taxon>Pseudomonadati</taxon>
        <taxon>Pseudomonadota</taxon>
        <taxon>Gammaproteobacteria</taxon>
        <taxon>Pasteurellales</taxon>
        <taxon>Pasteurellaceae</taxon>
        <taxon>Histophilus</taxon>
    </lineage>
</organism>
<sequence>MNIRPLHDRVIIKREEVETRSAGGIVLTGSAATKSTRAKVLAVGKGRILENGTVQPLDVKIGDTVIFNDGYGVKAEKIDGEEVLIISENDILAIVE</sequence>
<feature type="chain" id="PRO_1000082378" description="Co-chaperonin GroES">
    <location>
        <begin position="1"/>
        <end position="96"/>
    </location>
</feature>
<proteinExistence type="inferred from homology"/>
<keyword id="KW-0143">Chaperone</keyword>
<keyword id="KW-0963">Cytoplasm</keyword>
<accession>B0USK5</accession>
<evidence type="ECO:0000255" key="1">
    <source>
        <dbReference type="HAMAP-Rule" id="MF_00580"/>
    </source>
</evidence>
<dbReference type="EMBL" id="CP000947">
    <property type="protein sequence ID" value="ACA32436.1"/>
    <property type="molecule type" value="Genomic_DNA"/>
</dbReference>
<dbReference type="RefSeq" id="WP_011608624.1">
    <property type="nucleotide sequence ID" value="NC_010519.1"/>
</dbReference>
<dbReference type="SMR" id="B0USK5"/>
<dbReference type="STRING" id="228400.HSM_0766"/>
<dbReference type="GeneID" id="31487055"/>
<dbReference type="KEGG" id="hsm:HSM_0766"/>
<dbReference type="HOGENOM" id="CLU_132825_1_1_6"/>
<dbReference type="GO" id="GO:0005737">
    <property type="term" value="C:cytoplasm"/>
    <property type="evidence" value="ECO:0007669"/>
    <property type="project" value="UniProtKB-SubCell"/>
</dbReference>
<dbReference type="GO" id="GO:0005524">
    <property type="term" value="F:ATP binding"/>
    <property type="evidence" value="ECO:0007669"/>
    <property type="project" value="InterPro"/>
</dbReference>
<dbReference type="GO" id="GO:0046872">
    <property type="term" value="F:metal ion binding"/>
    <property type="evidence" value="ECO:0007669"/>
    <property type="project" value="TreeGrafter"/>
</dbReference>
<dbReference type="GO" id="GO:0044183">
    <property type="term" value="F:protein folding chaperone"/>
    <property type="evidence" value="ECO:0007669"/>
    <property type="project" value="InterPro"/>
</dbReference>
<dbReference type="GO" id="GO:0051087">
    <property type="term" value="F:protein-folding chaperone binding"/>
    <property type="evidence" value="ECO:0007669"/>
    <property type="project" value="TreeGrafter"/>
</dbReference>
<dbReference type="GO" id="GO:0051082">
    <property type="term" value="F:unfolded protein binding"/>
    <property type="evidence" value="ECO:0007669"/>
    <property type="project" value="TreeGrafter"/>
</dbReference>
<dbReference type="GO" id="GO:0051085">
    <property type="term" value="P:chaperone cofactor-dependent protein refolding"/>
    <property type="evidence" value="ECO:0007669"/>
    <property type="project" value="TreeGrafter"/>
</dbReference>
<dbReference type="CDD" id="cd00320">
    <property type="entry name" value="cpn10"/>
    <property type="match status" value="1"/>
</dbReference>
<dbReference type="FunFam" id="2.30.33.40:FF:000001">
    <property type="entry name" value="10 kDa chaperonin"/>
    <property type="match status" value="1"/>
</dbReference>
<dbReference type="Gene3D" id="2.30.33.40">
    <property type="entry name" value="GroES chaperonin"/>
    <property type="match status" value="1"/>
</dbReference>
<dbReference type="HAMAP" id="MF_00580">
    <property type="entry name" value="CH10"/>
    <property type="match status" value="1"/>
</dbReference>
<dbReference type="InterPro" id="IPR020818">
    <property type="entry name" value="Chaperonin_GroES"/>
</dbReference>
<dbReference type="InterPro" id="IPR037124">
    <property type="entry name" value="Chaperonin_GroES_sf"/>
</dbReference>
<dbReference type="InterPro" id="IPR018369">
    <property type="entry name" value="Chaprnonin_Cpn10_CS"/>
</dbReference>
<dbReference type="InterPro" id="IPR011032">
    <property type="entry name" value="GroES-like_sf"/>
</dbReference>
<dbReference type="NCBIfam" id="NF001526">
    <property type="entry name" value="PRK00364.1-1"/>
    <property type="match status" value="1"/>
</dbReference>
<dbReference type="NCBIfam" id="NF001531">
    <property type="entry name" value="PRK00364.2-2"/>
    <property type="match status" value="1"/>
</dbReference>
<dbReference type="PANTHER" id="PTHR10772">
    <property type="entry name" value="10 KDA HEAT SHOCK PROTEIN"/>
    <property type="match status" value="1"/>
</dbReference>
<dbReference type="PANTHER" id="PTHR10772:SF58">
    <property type="entry name" value="CO-CHAPERONIN GROES"/>
    <property type="match status" value="1"/>
</dbReference>
<dbReference type="Pfam" id="PF00166">
    <property type="entry name" value="Cpn10"/>
    <property type="match status" value="1"/>
</dbReference>
<dbReference type="PRINTS" id="PR00297">
    <property type="entry name" value="CHAPERONIN10"/>
</dbReference>
<dbReference type="SMART" id="SM00883">
    <property type="entry name" value="Cpn10"/>
    <property type="match status" value="1"/>
</dbReference>
<dbReference type="SUPFAM" id="SSF50129">
    <property type="entry name" value="GroES-like"/>
    <property type="match status" value="1"/>
</dbReference>
<dbReference type="PROSITE" id="PS00681">
    <property type="entry name" value="CHAPERONINS_CPN10"/>
    <property type="match status" value="1"/>
</dbReference>
<protein>
    <recommendedName>
        <fullName evidence="1">Co-chaperonin GroES</fullName>
    </recommendedName>
    <alternativeName>
        <fullName evidence="1">10 kDa chaperonin</fullName>
    </alternativeName>
    <alternativeName>
        <fullName evidence="1">Chaperonin-10</fullName>
        <shortName evidence="1">Cpn10</shortName>
    </alternativeName>
</protein>
<name>CH10_HISS2</name>
<reference key="1">
    <citation type="submission" date="2008-02" db="EMBL/GenBank/DDBJ databases">
        <title>Complete sequence of Haemophilus somnus 2336.</title>
        <authorList>
            <consortium name="US DOE Joint Genome Institute"/>
            <person name="Siddaramappa S."/>
            <person name="Duncan A.J."/>
            <person name="Challacombe J.F."/>
            <person name="Rainey D."/>
            <person name="Gillaspy A.F."/>
            <person name="Carson M."/>
            <person name="Gipson J."/>
            <person name="Gipson M."/>
            <person name="Bruce D."/>
            <person name="Detter J.C."/>
            <person name="Han C.S."/>
            <person name="Land M."/>
            <person name="Tapia R."/>
            <person name="Thompson L.S."/>
            <person name="Orvis J."/>
            <person name="Zaitshik J."/>
            <person name="Barnes G."/>
            <person name="Brettin T.S."/>
            <person name="Dyer D.W."/>
            <person name="Inzana T.J."/>
        </authorList>
    </citation>
    <scope>NUCLEOTIDE SEQUENCE [LARGE SCALE GENOMIC DNA]</scope>
    <source>
        <strain>2336</strain>
    </source>
</reference>